<evidence type="ECO:0000255" key="1">
    <source>
        <dbReference type="HAMAP-Rule" id="MF_01631"/>
    </source>
</evidence>
<comment type="function">
    <text evidence="1">Catalyzes the last two sequential reactions in the de novo biosynthetic pathway for UDP-N-acetylglucosamine (UDP-GlcNAc). The C-terminal domain catalyzes the transfer of acetyl group from acetyl coenzyme A to glucosamine-1-phosphate (GlcN-1-P) to produce N-acetylglucosamine-1-phosphate (GlcNAc-1-P), which is converted into UDP-GlcNAc by the transfer of uridine 5-monophosphate (from uridine 5-triphosphate), a reaction catalyzed by the N-terminal domain.</text>
</comment>
<comment type="catalytic activity">
    <reaction evidence="1">
        <text>alpha-D-glucosamine 1-phosphate + acetyl-CoA = N-acetyl-alpha-D-glucosamine 1-phosphate + CoA + H(+)</text>
        <dbReference type="Rhea" id="RHEA:13725"/>
        <dbReference type="ChEBI" id="CHEBI:15378"/>
        <dbReference type="ChEBI" id="CHEBI:57287"/>
        <dbReference type="ChEBI" id="CHEBI:57288"/>
        <dbReference type="ChEBI" id="CHEBI:57776"/>
        <dbReference type="ChEBI" id="CHEBI:58516"/>
        <dbReference type="EC" id="2.3.1.157"/>
    </reaction>
</comment>
<comment type="catalytic activity">
    <reaction evidence="1">
        <text>N-acetyl-alpha-D-glucosamine 1-phosphate + UTP + H(+) = UDP-N-acetyl-alpha-D-glucosamine + diphosphate</text>
        <dbReference type="Rhea" id="RHEA:13509"/>
        <dbReference type="ChEBI" id="CHEBI:15378"/>
        <dbReference type="ChEBI" id="CHEBI:33019"/>
        <dbReference type="ChEBI" id="CHEBI:46398"/>
        <dbReference type="ChEBI" id="CHEBI:57705"/>
        <dbReference type="ChEBI" id="CHEBI:57776"/>
        <dbReference type="EC" id="2.7.7.23"/>
    </reaction>
</comment>
<comment type="cofactor">
    <cofactor evidence="1">
        <name>Mg(2+)</name>
        <dbReference type="ChEBI" id="CHEBI:18420"/>
    </cofactor>
    <text evidence="1">Binds 1 Mg(2+) ion per subunit.</text>
</comment>
<comment type="pathway">
    <text evidence="1">Nucleotide-sugar biosynthesis; UDP-N-acetyl-alpha-D-glucosamine biosynthesis; N-acetyl-alpha-D-glucosamine 1-phosphate from alpha-D-glucosamine 6-phosphate (route II): step 2/2.</text>
</comment>
<comment type="pathway">
    <text evidence="1">Nucleotide-sugar biosynthesis; UDP-N-acetyl-alpha-D-glucosamine biosynthesis; UDP-N-acetyl-alpha-D-glucosamine from N-acetyl-alpha-D-glucosamine 1-phosphate: step 1/1.</text>
</comment>
<comment type="pathway">
    <text evidence="1">Bacterial outer membrane biogenesis; LPS lipid A biosynthesis.</text>
</comment>
<comment type="subunit">
    <text evidence="1">Homotrimer.</text>
</comment>
<comment type="subcellular location">
    <subcellularLocation>
        <location evidence="1">Cytoplasm</location>
    </subcellularLocation>
</comment>
<comment type="similarity">
    <text evidence="1">In the N-terminal section; belongs to the N-acetylglucosamine-1-phosphate uridyltransferase family.</text>
</comment>
<comment type="similarity">
    <text evidence="1">In the C-terminal section; belongs to the transferase hexapeptide repeat family.</text>
</comment>
<gene>
    <name evidence="1" type="primary">glmU</name>
    <name type="ordered locus">PLES_59481</name>
</gene>
<name>GLMU_PSEA8</name>
<proteinExistence type="inferred from homology"/>
<feature type="chain" id="PRO_1000186473" description="Bifunctional protein GlmU">
    <location>
        <begin position="1"/>
        <end position="454"/>
    </location>
</feature>
<feature type="region of interest" description="Pyrophosphorylase" evidence="1">
    <location>
        <begin position="1"/>
        <end position="226"/>
    </location>
</feature>
<feature type="region of interest" description="Linker" evidence="1">
    <location>
        <begin position="227"/>
        <end position="247"/>
    </location>
</feature>
<feature type="region of interest" description="N-acetyltransferase" evidence="1">
    <location>
        <begin position="248"/>
        <end position="454"/>
    </location>
</feature>
<feature type="active site" description="Proton acceptor" evidence="1">
    <location>
        <position position="360"/>
    </location>
</feature>
<feature type="binding site" evidence="1">
    <location>
        <begin position="8"/>
        <end position="11"/>
    </location>
    <ligand>
        <name>UDP-N-acetyl-alpha-D-glucosamine</name>
        <dbReference type="ChEBI" id="CHEBI:57705"/>
    </ligand>
</feature>
<feature type="binding site" evidence="1">
    <location>
        <position position="22"/>
    </location>
    <ligand>
        <name>UDP-N-acetyl-alpha-D-glucosamine</name>
        <dbReference type="ChEBI" id="CHEBI:57705"/>
    </ligand>
</feature>
<feature type="binding site" evidence="1">
    <location>
        <position position="73"/>
    </location>
    <ligand>
        <name>UDP-N-acetyl-alpha-D-glucosamine</name>
        <dbReference type="ChEBI" id="CHEBI:57705"/>
    </ligand>
</feature>
<feature type="binding site" evidence="1">
    <location>
        <begin position="78"/>
        <end position="79"/>
    </location>
    <ligand>
        <name>UDP-N-acetyl-alpha-D-glucosamine</name>
        <dbReference type="ChEBI" id="CHEBI:57705"/>
    </ligand>
</feature>
<feature type="binding site" evidence="1">
    <location>
        <begin position="99"/>
        <end position="101"/>
    </location>
    <ligand>
        <name>UDP-N-acetyl-alpha-D-glucosamine</name>
        <dbReference type="ChEBI" id="CHEBI:57705"/>
    </ligand>
</feature>
<feature type="binding site" evidence="1">
    <location>
        <position position="101"/>
    </location>
    <ligand>
        <name>Mg(2+)</name>
        <dbReference type="ChEBI" id="CHEBI:18420"/>
    </ligand>
</feature>
<feature type="binding site" evidence="1">
    <location>
        <position position="136"/>
    </location>
    <ligand>
        <name>UDP-N-acetyl-alpha-D-glucosamine</name>
        <dbReference type="ChEBI" id="CHEBI:57705"/>
    </ligand>
</feature>
<feature type="binding site" evidence="1">
    <location>
        <position position="151"/>
    </location>
    <ligand>
        <name>UDP-N-acetyl-alpha-D-glucosamine</name>
        <dbReference type="ChEBI" id="CHEBI:57705"/>
    </ligand>
</feature>
<feature type="binding site" evidence="1">
    <location>
        <position position="166"/>
    </location>
    <ligand>
        <name>UDP-N-acetyl-alpha-D-glucosamine</name>
        <dbReference type="ChEBI" id="CHEBI:57705"/>
    </ligand>
</feature>
<feature type="binding site" evidence="1">
    <location>
        <position position="224"/>
    </location>
    <ligand>
        <name>Mg(2+)</name>
        <dbReference type="ChEBI" id="CHEBI:18420"/>
    </ligand>
</feature>
<feature type="binding site" evidence="1">
    <location>
        <position position="224"/>
    </location>
    <ligand>
        <name>UDP-N-acetyl-alpha-D-glucosamine</name>
        <dbReference type="ChEBI" id="CHEBI:57705"/>
    </ligand>
</feature>
<feature type="binding site" evidence="1">
    <location>
        <position position="330"/>
    </location>
    <ligand>
        <name>UDP-N-acetyl-alpha-D-glucosamine</name>
        <dbReference type="ChEBI" id="CHEBI:57705"/>
    </ligand>
</feature>
<feature type="binding site" evidence="1">
    <location>
        <position position="348"/>
    </location>
    <ligand>
        <name>UDP-N-acetyl-alpha-D-glucosamine</name>
        <dbReference type="ChEBI" id="CHEBI:57705"/>
    </ligand>
</feature>
<feature type="binding site" evidence="1">
    <location>
        <position position="363"/>
    </location>
    <ligand>
        <name>UDP-N-acetyl-alpha-D-glucosamine</name>
        <dbReference type="ChEBI" id="CHEBI:57705"/>
    </ligand>
</feature>
<feature type="binding site" evidence="1">
    <location>
        <position position="374"/>
    </location>
    <ligand>
        <name>UDP-N-acetyl-alpha-D-glucosamine</name>
        <dbReference type="ChEBI" id="CHEBI:57705"/>
    </ligand>
</feature>
<feature type="binding site" evidence="1">
    <location>
        <position position="377"/>
    </location>
    <ligand>
        <name>acetyl-CoA</name>
        <dbReference type="ChEBI" id="CHEBI:57288"/>
    </ligand>
</feature>
<feature type="binding site" evidence="1">
    <location>
        <begin position="383"/>
        <end position="384"/>
    </location>
    <ligand>
        <name>acetyl-CoA</name>
        <dbReference type="ChEBI" id="CHEBI:57288"/>
    </ligand>
</feature>
<feature type="binding site" evidence="1">
    <location>
        <position position="402"/>
    </location>
    <ligand>
        <name>acetyl-CoA</name>
        <dbReference type="ChEBI" id="CHEBI:57288"/>
    </ligand>
</feature>
<feature type="binding site" evidence="1">
    <location>
        <position position="420"/>
    </location>
    <ligand>
        <name>acetyl-CoA</name>
        <dbReference type="ChEBI" id="CHEBI:57288"/>
    </ligand>
</feature>
<feature type="binding site" evidence="1">
    <location>
        <position position="437"/>
    </location>
    <ligand>
        <name>acetyl-CoA</name>
        <dbReference type="ChEBI" id="CHEBI:57288"/>
    </ligand>
</feature>
<protein>
    <recommendedName>
        <fullName evidence="1">Bifunctional protein GlmU</fullName>
    </recommendedName>
    <domain>
        <recommendedName>
            <fullName evidence="1">UDP-N-acetylglucosamine pyrophosphorylase</fullName>
            <ecNumber evidence="1">2.7.7.23</ecNumber>
        </recommendedName>
        <alternativeName>
            <fullName evidence="1">N-acetylglucosamine-1-phosphate uridyltransferase</fullName>
        </alternativeName>
    </domain>
    <domain>
        <recommendedName>
            <fullName evidence="1">Glucosamine-1-phosphate N-acetyltransferase</fullName>
            <ecNumber evidence="1">2.3.1.157</ecNumber>
        </recommendedName>
    </domain>
</protein>
<sequence length="454" mass="48833">MSLEIVILAAGQGTRMRSALPKVLHPIAGKPMLGHVIDCARQLQPERIHVVIGHGADLVRERMAADDLNFVLQAEQLGTGHAVAQALPFLSADQVLILYGDVPLIQLDTLQRLLAQVTPDQLSLLTVDMLDPTGYGRIVRDDQGAVQAIVEHKDATPAQRQIGEINTGILAVPGKRLADWLGRLSNDNAQGEYYLTDVIAMAVGDGLVVASAQPLDAMEVQGVNDRMQQAQLERHYQRLRAEELMRQGVTLLDPQRLDVRGEISVGRDVLIDVNVVLEGRVVIEDDVHIGPNCVIRDSVLRRGAVIKANSHLEGAELGEGSDAGPFARLRPGSVLGARAHVGNFVELKNARLGEGSKAGHLSYLGDAELGANCNIGAGTITCNYDGANKFRTELGDDVFIGSNNSLVAPLKIGDGATTAAGSTITHEVPAKNLAFGRARQKNLENWKRPEKIKK</sequence>
<accession>B7V789</accession>
<dbReference type="EC" id="2.7.7.23" evidence="1"/>
<dbReference type="EC" id="2.3.1.157" evidence="1"/>
<dbReference type="EMBL" id="FM209186">
    <property type="protein sequence ID" value="CAW30702.1"/>
    <property type="molecule type" value="Genomic_DNA"/>
</dbReference>
<dbReference type="RefSeq" id="WP_003109147.1">
    <property type="nucleotide sequence ID" value="NC_011770.1"/>
</dbReference>
<dbReference type="SMR" id="B7V789"/>
<dbReference type="KEGG" id="pag:PLES_59481"/>
<dbReference type="HOGENOM" id="CLU_029499_15_2_6"/>
<dbReference type="UniPathway" id="UPA00113">
    <property type="reaction ID" value="UER00532"/>
</dbReference>
<dbReference type="UniPathway" id="UPA00113">
    <property type="reaction ID" value="UER00533"/>
</dbReference>
<dbReference type="UniPathway" id="UPA00973"/>
<dbReference type="GO" id="GO:0005737">
    <property type="term" value="C:cytoplasm"/>
    <property type="evidence" value="ECO:0007669"/>
    <property type="project" value="UniProtKB-SubCell"/>
</dbReference>
<dbReference type="GO" id="GO:0016020">
    <property type="term" value="C:membrane"/>
    <property type="evidence" value="ECO:0007669"/>
    <property type="project" value="GOC"/>
</dbReference>
<dbReference type="GO" id="GO:0019134">
    <property type="term" value="F:glucosamine-1-phosphate N-acetyltransferase activity"/>
    <property type="evidence" value="ECO:0007669"/>
    <property type="project" value="UniProtKB-UniRule"/>
</dbReference>
<dbReference type="GO" id="GO:0000287">
    <property type="term" value="F:magnesium ion binding"/>
    <property type="evidence" value="ECO:0007669"/>
    <property type="project" value="UniProtKB-UniRule"/>
</dbReference>
<dbReference type="GO" id="GO:0003977">
    <property type="term" value="F:UDP-N-acetylglucosamine diphosphorylase activity"/>
    <property type="evidence" value="ECO:0007669"/>
    <property type="project" value="UniProtKB-UniRule"/>
</dbReference>
<dbReference type="GO" id="GO:0000902">
    <property type="term" value="P:cell morphogenesis"/>
    <property type="evidence" value="ECO:0007669"/>
    <property type="project" value="UniProtKB-UniRule"/>
</dbReference>
<dbReference type="GO" id="GO:0071555">
    <property type="term" value="P:cell wall organization"/>
    <property type="evidence" value="ECO:0007669"/>
    <property type="project" value="UniProtKB-KW"/>
</dbReference>
<dbReference type="GO" id="GO:0009245">
    <property type="term" value="P:lipid A biosynthetic process"/>
    <property type="evidence" value="ECO:0007669"/>
    <property type="project" value="UniProtKB-UniRule"/>
</dbReference>
<dbReference type="GO" id="GO:0009252">
    <property type="term" value="P:peptidoglycan biosynthetic process"/>
    <property type="evidence" value="ECO:0007669"/>
    <property type="project" value="UniProtKB-UniRule"/>
</dbReference>
<dbReference type="GO" id="GO:0008360">
    <property type="term" value="P:regulation of cell shape"/>
    <property type="evidence" value="ECO:0007669"/>
    <property type="project" value="UniProtKB-KW"/>
</dbReference>
<dbReference type="GO" id="GO:0006048">
    <property type="term" value="P:UDP-N-acetylglucosamine biosynthetic process"/>
    <property type="evidence" value="ECO:0007669"/>
    <property type="project" value="UniProtKB-UniPathway"/>
</dbReference>
<dbReference type="CDD" id="cd02540">
    <property type="entry name" value="GT2_GlmU_N_bac"/>
    <property type="match status" value="1"/>
</dbReference>
<dbReference type="CDD" id="cd03353">
    <property type="entry name" value="LbH_GlmU_C"/>
    <property type="match status" value="1"/>
</dbReference>
<dbReference type="Gene3D" id="2.160.10.10">
    <property type="entry name" value="Hexapeptide repeat proteins"/>
    <property type="match status" value="1"/>
</dbReference>
<dbReference type="Gene3D" id="3.90.550.10">
    <property type="entry name" value="Spore Coat Polysaccharide Biosynthesis Protein SpsA, Chain A"/>
    <property type="match status" value="1"/>
</dbReference>
<dbReference type="HAMAP" id="MF_01631">
    <property type="entry name" value="GlmU"/>
    <property type="match status" value="1"/>
</dbReference>
<dbReference type="InterPro" id="IPR005882">
    <property type="entry name" value="Bifunctional_GlmU"/>
</dbReference>
<dbReference type="InterPro" id="IPR050065">
    <property type="entry name" value="GlmU-like"/>
</dbReference>
<dbReference type="InterPro" id="IPR038009">
    <property type="entry name" value="GlmU_C_LbH"/>
</dbReference>
<dbReference type="InterPro" id="IPR001451">
    <property type="entry name" value="Hexapep"/>
</dbReference>
<dbReference type="InterPro" id="IPR025877">
    <property type="entry name" value="MobA-like_NTP_Trfase"/>
</dbReference>
<dbReference type="InterPro" id="IPR029044">
    <property type="entry name" value="Nucleotide-diphossugar_trans"/>
</dbReference>
<dbReference type="InterPro" id="IPR011004">
    <property type="entry name" value="Trimer_LpxA-like_sf"/>
</dbReference>
<dbReference type="NCBIfam" id="TIGR01173">
    <property type="entry name" value="glmU"/>
    <property type="match status" value="1"/>
</dbReference>
<dbReference type="PANTHER" id="PTHR43584:SF3">
    <property type="entry name" value="BIFUNCTIONAL PROTEIN GLMU"/>
    <property type="match status" value="1"/>
</dbReference>
<dbReference type="PANTHER" id="PTHR43584">
    <property type="entry name" value="NUCLEOTIDYL TRANSFERASE"/>
    <property type="match status" value="1"/>
</dbReference>
<dbReference type="Pfam" id="PF00132">
    <property type="entry name" value="Hexapep"/>
    <property type="match status" value="2"/>
</dbReference>
<dbReference type="Pfam" id="PF12804">
    <property type="entry name" value="NTP_transf_3"/>
    <property type="match status" value="1"/>
</dbReference>
<dbReference type="SUPFAM" id="SSF53448">
    <property type="entry name" value="Nucleotide-diphospho-sugar transferases"/>
    <property type="match status" value="1"/>
</dbReference>
<dbReference type="SUPFAM" id="SSF51161">
    <property type="entry name" value="Trimeric LpxA-like enzymes"/>
    <property type="match status" value="1"/>
</dbReference>
<reference key="1">
    <citation type="journal article" date="2009" name="Genome Res.">
        <title>Newly introduced genomic prophage islands are critical determinants of in vivo competitiveness in the Liverpool epidemic strain of Pseudomonas aeruginosa.</title>
        <authorList>
            <person name="Winstanley C."/>
            <person name="Langille M.G.I."/>
            <person name="Fothergill J.L."/>
            <person name="Kukavica-Ibrulj I."/>
            <person name="Paradis-Bleau C."/>
            <person name="Sanschagrin F."/>
            <person name="Thomson N.R."/>
            <person name="Winsor G.L."/>
            <person name="Quail M.A."/>
            <person name="Lennard N."/>
            <person name="Bignell A."/>
            <person name="Clarke L."/>
            <person name="Seeger K."/>
            <person name="Saunders D."/>
            <person name="Harris D."/>
            <person name="Parkhill J."/>
            <person name="Hancock R.E.W."/>
            <person name="Brinkman F.S.L."/>
            <person name="Levesque R.C."/>
        </authorList>
    </citation>
    <scope>NUCLEOTIDE SEQUENCE [LARGE SCALE GENOMIC DNA]</scope>
    <source>
        <strain>LESB58</strain>
    </source>
</reference>
<keyword id="KW-0012">Acyltransferase</keyword>
<keyword id="KW-0133">Cell shape</keyword>
<keyword id="KW-0961">Cell wall biogenesis/degradation</keyword>
<keyword id="KW-0963">Cytoplasm</keyword>
<keyword id="KW-0460">Magnesium</keyword>
<keyword id="KW-0479">Metal-binding</keyword>
<keyword id="KW-0511">Multifunctional enzyme</keyword>
<keyword id="KW-0548">Nucleotidyltransferase</keyword>
<keyword id="KW-0573">Peptidoglycan synthesis</keyword>
<keyword id="KW-0677">Repeat</keyword>
<keyword id="KW-0808">Transferase</keyword>
<organism>
    <name type="scientific">Pseudomonas aeruginosa (strain LESB58)</name>
    <dbReference type="NCBI Taxonomy" id="557722"/>
    <lineage>
        <taxon>Bacteria</taxon>
        <taxon>Pseudomonadati</taxon>
        <taxon>Pseudomonadota</taxon>
        <taxon>Gammaproteobacteria</taxon>
        <taxon>Pseudomonadales</taxon>
        <taxon>Pseudomonadaceae</taxon>
        <taxon>Pseudomonas</taxon>
    </lineage>
</organism>